<organism evidence="6">
    <name type="scientific">Arabidopsis thaliana</name>
    <name type="common">Mouse-ear cress</name>
    <dbReference type="NCBI Taxonomy" id="3702"/>
    <lineage>
        <taxon>Eukaryota</taxon>
        <taxon>Viridiplantae</taxon>
        <taxon>Streptophyta</taxon>
        <taxon>Embryophyta</taxon>
        <taxon>Tracheophyta</taxon>
        <taxon>Spermatophyta</taxon>
        <taxon>Magnoliopsida</taxon>
        <taxon>eudicotyledons</taxon>
        <taxon>Gunneridae</taxon>
        <taxon>Pentapetalae</taxon>
        <taxon>rosids</taxon>
        <taxon>malvids</taxon>
        <taxon>Brassicales</taxon>
        <taxon>Brassicaceae</taxon>
        <taxon>Camelineae</taxon>
        <taxon>Arabidopsis</taxon>
    </lineage>
</organism>
<sequence length="362" mass="41032">MHKSKRNPSFSSTLLDEIYNSIDPKTQKTQPYVGSVNTTTKKQSIVTRSVPDRKIHRDRFFGSVSSSSDSNSSIFSSSDTELTHGKKTTSSRPLCFGPSKTKPRKTEDKTLFHQNRATRVYDDYDYASDVPKFNRHDENWENTRNRRSVKSSGNQKKPKTPASPGGRIVNFLNSLFSNNSKQSNAVKSYPRKTSYDDSAYVRKTSNDYHSSTTTCSSASSFSRSCMNKGYEKSSGRIKRSVRFSPVNVIVPESFTSKEEDYFSNGNARKSVKKNVEDGGRRSVEEIAREFLRDYHKNHENSLVKTNGFEDYEDDDEDDDDDDVASDSSSDLFELDLVGNHHHHNVYGDELPVYETTFAGLIL</sequence>
<proteinExistence type="evidence at transcript level"/>
<gene>
    <name evidence="4" type="ordered locus">At5g12050</name>
    <name evidence="5" type="ORF">F14F18.220</name>
</gene>
<comment type="function">
    <text evidence="1">Involved in auxin transport. Regulator of the auxin signaling pathway.</text>
</comment>
<comment type="subcellular location">
    <subcellularLocation>
        <location evidence="1">Cell membrane</location>
    </subcellularLocation>
</comment>
<comment type="similarity">
    <text evidence="3">Belongs to the BIG GRAIN 1 (BG1) plant protein family.</text>
</comment>
<protein>
    <recommendedName>
        <fullName evidence="3">Protein BIG GRAIN 1-like D</fullName>
    </recommendedName>
</protein>
<evidence type="ECO:0000250" key="1">
    <source>
        <dbReference type="UniProtKB" id="Q10R09"/>
    </source>
</evidence>
<evidence type="ECO:0000256" key="2">
    <source>
        <dbReference type="SAM" id="MobiDB-lite"/>
    </source>
</evidence>
<evidence type="ECO:0000305" key="3"/>
<evidence type="ECO:0000312" key="4">
    <source>
        <dbReference type="EMBL" id="AED91756.1"/>
    </source>
</evidence>
<evidence type="ECO:0000312" key="5">
    <source>
        <dbReference type="EMBL" id="CAB87678.1"/>
    </source>
</evidence>
<evidence type="ECO:0000312" key="6">
    <source>
        <dbReference type="Proteomes" id="UP000006548"/>
    </source>
</evidence>
<feature type="chain" id="PRO_0000434447" description="Protein BIG GRAIN 1-like D">
    <location>
        <begin position="1"/>
        <end position="362"/>
    </location>
</feature>
<feature type="region of interest" description="Disordered" evidence="2">
    <location>
        <begin position="22"/>
        <end position="113"/>
    </location>
</feature>
<feature type="region of interest" description="Disordered" evidence="2">
    <location>
        <begin position="132"/>
        <end position="168"/>
    </location>
</feature>
<feature type="region of interest" description="Disordered" evidence="2">
    <location>
        <begin position="303"/>
        <end position="327"/>
    </location>
</feature>
<feature type="compositionally biased region" description="Polar residues" evidence="2">
    <location>
        <begin position="23"/>
        <end position="47"/>
    </location>
</feature>
<feature type="compositionally biased region" description="Basic and acidic residues" evidence="2">
    <location>
        <begin position="50"/>
        <end position="60"/>
    </location>
</feature>
<feature type="compositionally biased region" description="Low complexity" evidence="2">
    <location>
        <begin position="63"/>
        <end position="78"/>
    </location>
</feature>
<feature type="compositionally biased region" description="Basic and acidic residues" evidence="2">
    <location>
        <begin position="132"/>
        <end position="144"/>
    </location>
</feature>
<feature type="compositionally biased region" description="Acidic residues" evidence="2">
    <location>
        <begin position="309"/>
        <end position="324"/>
    </location>
</feature>
<feature type="sequence conflict" description="In Ref. 4; AAM65142." evidence="3" ref="4">
    <original>E</original>
    <variation>K</variation>
    <location>
        <position position="138"/>
    </location>
</feature>
<accession>Q9LYH0</accession>
<accession>Q8LAU6</accession>
<reference key="1">
    <citation type="journal article" date="2000" name="Nature">
        <title>Sequence and analysis of chromosome 5 of the plant Arabidopsis thaliana.</title>
        <authorList>
            <person name="Tabata S."/>
            <person name="Kaneko T."/>
            <person name="Nakamura Y."/>
            <person name="Kotani H."/>
            <person name="Kato T."/>
            <person name="Asamizu E."/>
            <person name="Miyajima N."/>
            <person name="Sasamoto S."/>
            <person name="Kimura T."/>
            <person name="Hosouchi T."/>
            <person name="Kawashima K."/>
            <person name="Kohara M."/>
            <person name="Matsumoto M."/>
            <person name="Matsuno A."/>
            <person name="Muraki A."/>
            <person name="Nakayama S."/>
            <person name="Nakazaki N."/>
            <person name="Naruo K."/>
            <person name="Okumura S."/>
            <person name="Shinpo S."/>
            <person name="Takeuchi C."/>
            <person name="Wada T."/>
            <person name="Watanabe A."/>
            <person name="Yamada M."/>
            <person name="Yasuda M."/>
            <person name="Sato S."/>
            <person name="de la Bastide M."/>
            <person name="Huang E."/>
            <person name="Spiegel L."/>
            <person name="Gnoj L."/>
            <person name="O'Shaughnessy A."/>
            <person name="Preston R."/>
            <person name="Habermann K."/>
            <person name="Murray J."/>
            <person name="Johnson D."/>
            <person name="Rohlfing T."/>
            <person name="Nelson J."/>
            <person name="Stoneking T."/>
            <person name="Pepin K."/>
            <person name="Spieth J."/>
            <person name="Sekhon M."/>
            <person name="Armstrong J."/>
            <person name="Becker M."/>
            <person name="Belter E."/>
            <person name="Cordum H."/>
            <person name="Cordes M."/>
            <person name="Courtney L."/>
            <person name="Courtney W."/>
            <person name="Dante M."/>
            <person name="Du H."/>
            <person name="Edwards J."/>
            <person name="Fryman J."/>
            <person name="Haakensen B."/>
            <person name="Lamar E."/>
            <person name="Latreille P."/>
            <person name="Leonard S."/>
            <person name="Meyer R."/>
            <person name="Mulvaney E."/>
            <person name="Ozersky P."/>
            <person name="Riley A."/>
            <person name="Strowmatt C."/>
            <person name="Wagner-McPherson C."/>
            <person name="Wollam A."/>
            <person name="Yoakum M."/>
            <person name="Bell M."/>
            <person name="Dedhia N."/>
            <person name="Parnell L."/>
            <person name="Shah R."/>
            <person name="Rodriguez M."/>
            <person name="Hoon See L."/>
            <person name="Vil D."/>
            <person name="Baker J."/>
            <person name="Kirchoff K."/>
            <person name="Toth K."/>
            <person name="King L."/>
            <person name="Bahret A."/>
            <person name="Miller B."/>
            <person name="Marra M.A."/>
            <person name="Martienssen R."/>
            <person name="McCombie W.R."/>
            <person name="Wilson R.K."/>
            <person name="Murphy G."/>
            <person name="Bancroft I."/>
            <person name="Volckaert G."/>
            <person name="Wambutt R."/>
            <person name="Duesterhoeft A."/>
            <person name="Stiekema W."/>
            <person name="Pohl T."/>
            <person name="Entian K.-D."/>
            <person name="Terryn N."/>
            <person name="Hartley N."/>
            <person name="Bent E."/>
            <person name="Johnson S."/>
            <person name="Langham S.-A."/>
            <person name="McCullagh B."/>
            <person name="Robben J."/>
            <person name="Grymonprez B."/>
            <person name="Zimmermann W."/>
            <person name="Ramsperger U."/>
            <person name="Wedler H."/>
            <person name="Balke K."/>
            <person name="Wedler E."/>
            <person name="Peters S."/>
            <person name="van Staveren M."/>
            <person name="Dirkse W."/>
            <person name="Mooijman P."/>
            <person name="Klein Lankhorst R."/>
            <person name="Weitzenegger T."/>
            <person name="Bothe G."/>
            <person name="Rose M."/>
            <person name="Hauf J."/>
            <person name="Berneiser S."/>
            <person name="Hempel S."/>
            <person name="Feldpausch M."/>
            <person name="Lamberth S."/>
            <person name="Villarroel R."/>
            <person name="Gielen J."/>
            <person name="Ardiles W."/>
            <person name="Bents O."/>
            <person name="Lemcke K."/>
            <person name="Kolesov G."/>
            <person name="Mayer K.F.X."/>
            <person name="Rudd S."/>
            <person name="Schoof H."/>
            <person name="Schueller C."/>
            <person name="Zaccaria P."/>
            <person name="Mewes H.-W."/>
            <person name="Bevan M."/>
            <person name="Fransz P.F."/>
        </authorList>
    </citation>
    <scope>NUCLEOTIDE SEQUENCE [LARGE SCALE GENOMIC DNA]</scope>
    <source>
        <strain>cv. Columbia</strain>
    </source>
</reference>
<reference key="2">
    <citation type="journal article" date="2017" name="Plant J.">
        <title>Araport11: a complete reannotation of the Arabidopsis thaliana reference genome.</title>
        <authorList>
            <person name="Cheng C.Y."/>
            <person name="Krishnakumar V."/>
            <person name="Chan A.P."/>
            <person name="Thibaud-Nissen F."/>
            <person name="Schobel S."/>
            <person name="Town C.D."/>
        </authorList>
    </citation>
    <scope>GENOME REANNOTATION</scope>
    <source>
        <strain>cv. Columbia</strain>
    </source>
</reference>
<reference key="3">
    <citation type="journal article" date="2003" name="Science">
        <title>Empirical analysis of transcriptional activity in the Arabidopsis genome.</title>
        <authorList>
            <person name="Yamada K."/>
            <person name="Lim J."/>
            <person name="Dale J.M."/>
            <person name="Chen H."/>
            <person name="Shinn P."/>
            <person name="Palm C.J."/>
            <person name="Southwick A.M."/>
            <person name="Wu H.C."/>
            <person name="Kim C.J."/>
            <person name="Nguyen M."/>
            <person name="Pham P.K."/>
            <person name="Cheuk R.F."/>
            <person name="Karlin-Newmann G."/>
            <person name="Liu S.X."/>
            <person name="Lam B."/>
            <person name="Sakano H."/>
            <person name="Wu T."/>
            <person name="Yu G."/>
            <person name="Miranda M."/>
            <person name="Quach H.L."/>
            <person name="Tripp M."/>
            <person name="Chang C.H."/>
            <person name="Lee J.M."/>
            <person name="Toriumi M.J."/>
            <person name="Chan M.M."/>
            <person name="Tang C.C."/>
            <person name="Onodera C.S."/>
            <person name="Deng J.M."/>
            <person name="Akiyama K."/>
            <person name="Ansari Y."/>
            <person name="Arakawa T."/>
            <person name="Banh J."/>
            <person name="Banno F."/>
            <person name="Bowser L."/>
            <person name="Brooks S.Y."/>
            <person name="Carninci P."/>
            <person name="Chao Q."/>
            <person name="Choy N."/>
            <person name="Enju A."/>
            <person name="Goldsmith A.D."/>
            <person name="Gurjal M."/>
            <person name="Hansen N.F."/>
            <person name="Hayashizaki Y."/>
            <person name="Johnson-Hopson C."/>
            <person name="Hsuan V.W."/>
            <person name="Iida K."/>
            <person name="Karnes M."/>
            <person name="Khan S."/>
            <person name="Koesema E."/>
            <person name="Ishida J."/>
            <person name="Jiang P.X."/>
            <person name="Jones T."/>
            <person name="Kawai J."/>
            <person name="Kamiya A."/>
            <person name="Meyers C."/>
            <person name="Nakajima M."/>
            <person name="Narusaka M."/>
            <person name="Seki M."/>
            <person name="Sakurai T."/>
            <person name="Satou M."/>
            <person name="Tamse R."/>
            <person name="Vaysberg M."/>
            <person name="Wallender E.K."/>
            <person name="Wong C."/>
            <person name="Yamamura Y."/>
            <person name="Yuan S."/>
            <person name="Shinozaki K."/>
            <person name="Davis R.W."/>
            <person name="Theologis A."/>
            <person name="Ecker J.R."/>
        </authorList>
    </citation>
    <scope>NUCLEOTIDE SEQUENCE [LARGE SCALE MRNA]</scope>
    <source>
        <strain>cv. Columbia</strain>
    </source>
</reference>
<reference key="4">
    <citation type="submission" date="2002-03" db="EMBL/GenBank/DDBJ databases">
        <title>Full-length cDNA from Arabidopsis thaliana.</title>
        <authorList>
            <person name="Brover V.V."/>
            <person name="Troukhan M.E."/>
            <person name="Alexandrov N.A."/>
            <person name="Lu Y.-P."/>
            <person name="Flavell R.B."/>
            <person name="Feldmann K.A."/>
        </authorList>
    </citation>
    <scope>NUCLEOTIDE SEQUENCE [LARGE SCALE MRNA]</scope>
</reference>
<name>BIG1D_ARATH</name>
<dbReference type="EMBL" id="AL163812">
    <property type="protein sequence ID" value="CAB87678.1"/>
    <property type="molecule type" value="Genomic_DNA"/>
</dbReference>
<dbReference type="EMBL" id="CP002688">
    <property type="protein sequence ID" value="AED91756.1"/>
    <property type="molecule type" value="Genomic_DNA"/>
</dbReference>
<dbReference type="EMBL" id="AF370183">
    <property type="protein sequence ID" value="AAK43998.1"/>
    <property type="molecule type" value="mRNA"/>
</dbReference>
<dbReference type="EMBL" id="AY059141">
    <property type="protein sequence ID" value="AAL15247.1"/>
    <property type="molecule type" value="mRNA"/>
</dbReference>
<dbReference type="EMBL" id="AY087600">
    <property type="protein sequence ID" value="AAM65142.1"/>
    <property type="molecule type" value="mRNA"/>
</dbReference>
<dbReference type="PIR" id="T48564">
    <property type="entry name" value="T48564"/>
</dbReference>
<dbReference type="RefSeq" id="NP_196766.1">
    <property type="nucleotide sequence ID" value="NM_121243.3"/>
</dbReference>
<dbReference type="PaxDb" id="3702-AT5G12050.1"/>
<dbReference type="ProteomicsDB" id="240838"/>
<dbReference type="EnsemblPlants" id="AT5G12050.1">
    <property type="protein sequence ID" value="AT5G12050.1"/>
    <property type="gene ID" value="AT5G12050"/>
</dbReference>
<dbReference type="GeneID" id="831078"/>
<dbReference type="Gramene" id="AT5G12050.1">
    <property type="protein sequence ID" value="AT5G12050.1"/>
    <property type="gene ID" value="AT5G12050"/>
</dbReference>
<dbReference type="KEGG" id="ath:AT5G12050"/>
<dbReference type="Araport" id="AT5G12050"/>
<dbReference type="TAIR" id="AT5G12050">
    <property type="gene designation" value="BG1"/>
</dbReference>
<dbReference type="eggNOG" id="ENOG502QWFY">
    <property type="taxonomic scope" value="Eukaryota"/>
</dbReference>
<dbReference type="HOGENOM" id="CLU_048356_1_0_1"/>
<dbReference type="InParanoid" id="Q9LYH0"/>
<dbReference type="OMA" id="SEQIMHR"/>
<dbReference type="OrthoDB" id="1101185at2759"/>
<dbReference type="PhylomeDB" id="Q9LYH0"/>
<dbReference type="PRO" id="PR:Q9LYH0"/>
<dbReference type="Proteomes" id="UP000006548">
    <property type="component" value="Chromosome 5"/>
</dbReference>
<dbReference type="ExpressionAtlas" id="Q9LYH0">
    <property type="expression patterns" value="baseline and differential"/>
</dbReference>
<dbReference type="GO" id="GO:0005886">
    <property type="term" value="C:plasma membrane"/>
    <property type="evidence" value="ECO:0000250"/>
    <property type="project" value="UniProtKB"/>
</dbReference>
<dbReference type="GO" id="GO:0060918">
    <property type="term" value="P:auxin transport"/>
    <property type="evidence" value="ECO:0000250"/>
    <property type="project" value="UniProtKB"/>
</dbReference>
<dbReference type="GO" id="GO:0009734">
    <property type="term" value="P:auxin-activated signaling pathway"/>
    <property type="evidence" value="ECO:0007669"/>
    <property type="project" value="UniProtKB-KW"/>
</dbReference>
<dbReference type="GO" id="GO:0007623">
    <property type="term" value="P:circadian rhythm"/>
    <property type="evidence" value="ECO:0000270"/>
    <property type="project" value="TAIR"/>
</dbReference>
<dbReference type="GO" id="GO:0010929">
    <property type="term" value="P:positive regulation of auxin mediated signaling pathway"/>
    <property type="evidence" value="ECO:0000250"/>
    <property type="project" value="UniProtKB"/>
</dbReference>
<dbReference type="InterPro" id="IPR039621">
    <property type="entry name" value="BG1-like"/>
</dbReference>
<dbReference type="PANTHER" id="PTHR33541">
    <property type="entry name" value="PROTEIN BIG GRAIN 1-LIKE A-RELATED"/>
    <property type="match status" value="1"/>
</dbReference>
<dbReference type="PANTHER" id="PTHR33541:SF15">
    <property type="entry name" value="PROTEIN BIG GRAIN 1-LIKE D"/>
    <property type="match status" value="1"/>
</dbReference>
<keyword id="KW-0927">Auxin signaling pathway</keyword>
<keyword id="KW-1003">Cell membrane</keyword>
<keyword id="KW-0472">Membrane</keyword>
<keyword id="KW-1185">Reference proteome</keyword>
<keyword id="KW-0813">Transport</keyword>